<evidence type="ECO:0000250" key="1"/>
<evidence type="ECO:0000305" key="2"/>
<accession>P47364</accession>
<organism>
    <name type="scientific">Mycoplasma genitalium (strain ATCC 33530 / DSM 19775 / NCTC 10195 / G37)</name>
    <name type="common">Mycoplasmoides genitalium</name>
    <dbReference type="NCBI Taxonomy" id="243273"/>
    <lineage>
        <taxon>Bacteria</taxon>
        <taxon>Bacillati</taxon>
        <taxon>Mycoplasmatota</taxon>
        <taxon>Mycoplasmoidales</taxon>
        <taxon>Mycoplasmoidaceae</taxon>
        <taxon>Mycoplasmoides</taxon>
    </lineage>
</organism>
<gene>
    <name type="primary">galE</name>
    <name type="ordered locus">MG118</name>
</gene>
<protein>
    <recommendedName>
        <fullName>UDP-glucose 4-epimerase</fullName>
        <ecNumber>5.1.3.2</ecNumber>
    </recommendedName>
    <alternativeName>
        <fullName>Galactowaldenase</fullName>
    </alternativeName>
    <alternativeName>
        <fullName>UDP-galactose 4-epimerase</fullName>
    </alternativeName>
</protein>
<name>GALE_MYCGE</name>
<dbReference type="EC" id="5.1.3.2"/>
<dbReference type="EMBL" id="L43967">
    <property type="protein sequence ID" value="AAC71336.1"/>
    <property type="molecule type" value="Genomic_DNA"/>
</dbReference>
<dbReference type="PIR" id="A64213">
    <property type="entry name" value="A64213"/>
</dbReference>
<dbReference type="RefSeq" id="WP_010869340.1">
    <property type="nucleotide sequence ID" value="NC_000908.2"/>
</dbReference>
<dbReference type="SMR" id="P47364"/>
<dbReference type="FunCoup" id="P47364">
    <property type="interactions" value="97"/>
</dbReference>
<dbReference type="STRING" id="243273.MG_118"/>
<dbReference type="GeneID" id="88282242"/>
<dbReference type="KEGG" id="mge:MG_118"/>
<dbReference type="eggNOG" id="COG1087">
    <property type="taxonomic scope" value="Bacteria"/>
</dbReference>
<dbReference type="HOGENOM" id="CLU_007383_1_10_14"/>
<dbReference type="InParanoid" id="P47364"/>
<dbReference type="OrthoDB" id="9811743at2"/>
<dbReference type="BioCyc" id="MGEN243273:G1GJ2-131-MONOMER"/>
<dbReference type="UniPathway" id="UPA00214"/>
<dbReference type="Proteomes" id="UP000000807">
    <property type="component" value="Chromosome"/>
</dbReference>
<dbReference type="GO" id="GO:0003978">
    <property type="term" value="F:UDP-glucose 4-epimerase activity"/>
    <property type="evidence" value="ECO:0007669"/>
    <property type="project" value="UniProtKB-EC"/>
</dbReference>
<dbReference type="GO" id="GO:0006012">
    <property type="term" value="P:galactose metabolic process"/>
    <property type="evidence" value="ECO:0007669"/>
    <property type="project" value="UniProtKB-UniPathway"/>
</dbReference>
<dbReference type="CDD" id="cd05247">
    <property type="entry name" value="UDP_G4E_1_SDR_e"/>
    <property type="match status" value="1"/>
</dbReference>
<dbReference type="Gene3D" id="3.40.50.720">
    <property type="entry name" value="NAD(P)-binding Rossmann-like Domain"/>
    <property type="match status" value="1"/>
</dbReference>
<dbReference type="Gene3D" id="3.90.25.10">
    <property type="entry name" value="UDP-galactose 4-epimerase, domain 1"/>
    <property type="match status" value="1"/>
</dbReference>
<dbReference type="InterPro" id="IPR001509">
    <property type="entry name" value="Epimerase_deHydtase"/>
</dbReference>
<dbReference type="InterPro" id="IPR036291">
    <property type="entry name" value="NAD(P)-bd_dom_sf"/>
</dbReference>
<dbReference type="InterPro" id="IPR005886">
    <property type="entry name" value="UDP_G4E"/>
</dbReference>
<dbReference type="NCBIfam" id="TIGR01179">
    <property type="entry name" value="galE"/>
    <property type="match status" value="1"/>
</dbReference>
<dbReference type="PANTHER" id="PTHR43725:SF53">
    <property type="entry name" value="UDP-ARABINOSE 4-EPIMERASE 1"/>
    <property type="match status" value="1"/>
</dbReference>
<dbReference type="PANTHER" id="PTHR43725">
    <property type="entry name" value="UDP-GLUCOSE 4-EPIMERASE"/>
    <property type="match status" value="1"/>
</dbReference>
<dbReference type="Pfam" id="PF01370">
    <property type="entry name" value="Epimerase"/>
    <property type="match status" value="1"/>
</dbReference>
<dbReference type="SUPFAM" id="SSF51735">
    <property type="entry name" value="NAD(P)-binding Rossmann-fold domains"/>
    <property type="match status" value="1"/>
</dbReference>
<feature type="chain" id="PRO_0000183209" description="UDP-glucose 4-epimerase">
    <location>
        <begin position="1"/>
        <end position="340"/>
    </location>
</feature>
<feature type="active site" description="Proton acceptor" evidence="1">
    <location>
        <position position="154"/>
    </location>
</feature>
<feature type="binding site" evidence="1">
    <location>
        <begin position="16"/>
        <end position="17"/>
    </location>
    <ligand>
        <name>NAD(+)</name>
        <dbReference type="ChEBI" id="CHEBI:57540"/>
    </ligand>
</feature>
<feature type="binding site" evidence="1">
    <location>
        <begin position="37"/>
        <end position="42"/>
    </location>
    <ligand>
        <name>NAD(+)</name>
        <dbReference type="ChEBI" id="CHEBI:57540"/>
    </ligand>
</feature>
<feature type="binding site" evidence="1">
    <location>
        <begin position="60"/>
        <end position="61"/>
    </location>
    <ligand>
        <name>NAD(+)</name>
        <dbReference type="ChEBI" id="CHEBI:57540"/>
    </ligand>
</feature>
<feature type="binding site" evidence="1">
    <location>
        <begin position="82"/>
        <end position="86"/>
    </location>
    <ligand>
        <name>NAD(+)</name>
        <dbReference type="ChEBI" id="CHEBI:57540"/>
    </ligand>
</feature>
<feature type="binding site" evidence="1">
    <location>
        <position position="127"/>
    </location>
    <ligand>
        <name>NAD(+)</name>
        <dbReference type="ChEBI" id="CHEBI:57540"/>
    </ligand>
</feature>
<feature type="binding site" evidence="1">
    <location>
        <position position="127"/>
    </location>
    <ligand>
        <name>substrate</name>
    </ligand>
</feature>
<feature type="binding site" evidence="1">
    <location>
        <position position="154"/>
    </location>
    <ligand>
        <name>NAD(+)</name>
        <dbReference type="ChEBI" id="CHEBI:57540"/>
    </ligand>
</feature>
<feature type="binding site" evidence="1">
    <location>
        <position position="154"/>
    </location>
    <ligand>
        <name>substrate</name>
    </ligand>
</feature>
<feature type="binding site" evidence="1">
    <location>
        <position position="158"/>
    </location>
    <ligand>
        <name>NAD(+)</name>
        <dbReference type="ChEBI" id="CHEBI:57540"/>
    </ligand>
</feature>
<feature type="binding site" evidence="1">
    <location>
        <position position="182"/>
    </location>
    <ligand>
        <name>NAD(+)</name>
        <dbReference type="ChEBI" id="CHEBI:57540"/>
    </ligand>
</feature>
<feature type="binding site" evidence="1">
    <location>
        <position position="183"/>
    </location>
    <ligand>
        <name>substrate</name>
    </ligand>
</feature>
<feature type="binding site" evidence="1">
    <location>
        <begin position="199"/>
        <end position="200"/>
    </location>
    <ligand>
        <name>substrate</name>
    </ligand>
</feature>
<feature type="binding site" evidence="1">
    <location>
        <begin position="216"/>
        <end position="218"/>
    </location>
    <ligand>
        <name>substrate</name>
    </ligand>
</feature>
<feature type="binding site" evidence="1">
    <location>
        <position position="231"/>
    </location>
    <ligand>
        <name>substrate</name>
    </ligand>
</feature>
<feature type="binding site" evidence="1">
    <location>
        <begin position="295"/>
        <end position="298"/>
    </location>
    <ligand>
        <name>substrate</name>
    </ligand>
</feature>
<reference key="1">
    <citation type="journal article" date="1995" name="Science">
        <title>The minimal gene complement of Mycoplasma genitalium.</title>
        <authorList>
            <person name="Fraser C.M."/>
            <person name="Gocayne J.D."/>
            <person name="White O."/>
            <person name="Adams M.D."/>
            <person name="Clayton R.A."/>
            <person name="Fleischmann R.D."/>
            <person name="Bult C.J."/>
            <person name="Kerlavage A.R."/>
            <person name="Sutton G.G."/>
            <person name="Kelley J.M."/>
            <person name="Fritchman J.L."/>
            <person name="Weidman J.F."/>
            <person name="Small K.V."/>
            <person name="Sandusky M."/>
            <person name="Fuhrmann J.L."/>
            <person name="Nguyen D.T."/>
            <person name="Utterback T.R."/>
            <person name="Saudek D.M."/>
            <person name="Phillips C.A."/>
            <person name="Merrick J.M."/>
            <person name="Tomb J.-F."/>
            <person name="Dougherty B.A."/>
            <person name="Bott K.F."/>
            <person name="Hu P.-C."/>
            <person name="Lucier T.S."/>
            <person name="Peterson S.N."/>
            <person name="Smith H.O."/>
            <person name="Hutchison C.A. III"/>
            <person name="Venter J.C."/>
        </authorList>
    </citation>
    <scope>NUCLEOTIDE SEQUENCE [LARGE SCALE GENOMIC DNA]</scope>
    <source>
        <strain>ATCC 33530 / DSM 19775 / NCTC 10195 / G37</strain>
    </source>
</reference>
<proteinExistence type="inferred from homology"/>
<comment type="function">
    <text evidence="1">Involved in the metabolism of galactose. Catalyzes the conversion of UDP-galactose (UDP-Gal) to UDP-glucose (UDP-Glc) through a mechanism involving the transient reduction of NAD (By similarity).</text>
</comment>
<comment type="catalytic activity">
    <reaction>
        <text>UDP-alpha-D-glucose = UDP-alpha-D-galactose</text>
        <dbReference type="Rhea" id="RHEA:22168"/>
        <dbReference type="ChEBI" id="CHEBI:58885"/>
        <dbReference type="ChEBI" id="CHEBI:66914"/>
        <dbReference type="EC" id="5.1.3.2"/>
    </reaction>
</comment>
<comment type="cofactor">
    <cofactor evidence="1">
        <name>NAD(+)</name>
        <dbReference type="ChEBI" id="CHEBI:57540"/>
    </cofactor>
</comment>
<comment type="pathway">
    <text>Carbohydrate metabolism; galactose metabolism.</text>
</comment>
<comment type="subunit">
    <text evidence="1">Homodimer.</text>
</comment>
<comment type="similarity">
    <text evidence="2">Belongs to the NAD(P)-dependent epimerase/dehydratase family.</text>
</comment>
<keyword id="KW-0119">Carbohydrate metabolism</keyword>
<keyword id="KW-0299">Galactose metabolism</keyword>
<keyword id="KW-0413">Isomerase</keyword>
<keyword id="KW-0520">NAD</keyword>
<keyword id="KW-1185">Reference proteome</keyword>
<sequence length="340" mass="38425">MIGAKTRVAIVGGIGYIGSCFASFIKEQNDKLIVTVIDNNKNNHVIKLLKKIGIEFYFADLLDRHKLTEVIAAIQPDVVFHFAAKTSVSESVHNPLKYFDCNVIGTLNLISAISNLQKPIKLFFASSAAVYGQTTNSYISEEIVITETQATNPYGLSKFLDELILNAVAKNSQLQVVCLRFFNVAGAILPFGNFNGNTTLLIPNLVKAFLKQTPFFLYGNDYATKDGSCIRDYIHVYDICNAHFLLWKWLNDHRQIKFETFNLGSGIGTSNLEVIDIAKKVFYPSRLNLEIRPKRSWDPAILVANVAKAKQTFQFKITRNLKDMISDERNFYENFYNDAY</sequence>